<dbReference type="EMBL" id="CP000678">
    <property type="protein sequence ID" value="ABQ87632.1"/>
    <property type="molecule type" value="Genomic_DNA"/>
</dbReference>
<dbReference type="RefSeq" id="WP_004033264.1">
    <property type="nucleotide sequence ID" value="NZ_CP117965.1"/>
</dbReference>
<dbReference type="SMR" id="A5UN54"/>
<dbReference type="STRING" id="420247.Msm_1427"/>
<dbReference type="EnsemblBacteria" id="ABQ87632">
    <property type="protein sequence ID" value="ABQ87632"/>
    <property type="gene ID" value="Msm_1427"/>
</dbReference>
<dbReference type="KEGG" id="msi:Msm_1427"/>
<dbReference type="PATRIC" id="fig|420247.28.peg.1421"/>
<dbReference type="eggNOG" id="arCOG04240">
    <property type="taxonomic scope" value="Archaea"/>
</dbReference>
<dbReference type="HOGENOM" id="CLU_072439_6_1_2"/>
<dbReference type="Proteomes" id="UP000001992">
    <property type="component" value="Chromosome"/>
</dbReference>
<dbReference type="GO" id="GO:1990904">
    <property type="term" value="C:ribonucleoprotein complex"/>
    <property type="evidence" value="ECO:0007669"/>
    <property type="project" value="UniProtKB-KW"/>
</dbReference>
<dbReference type="GO" id="GO:0005840">
    <property type="term" value="C:ribosome"/>
    <property type="evidence" value="ECO:0007669"/>
    <property type="project" value="UniProtKB-KW"/>
</dbReference>
<dbReference type="GO" id="GO:0019843">
    <property type="term" value="F:rRNA binding"/>
    <property type="evidence" value="ECO:0007669"/>
    <property type="project" value="UniProtKB-UniRule"/>
</dbReference>
<dbReference type="GO" id="GO:0003735">
    <property type="term" value="F:structural constituent of ribosome"/>
    <property type="evidence" value="ECO:0007669"/>
    <property type="project" value="InterPro"/>
</dbReference>
<dbReference type="GO" id="GO:0006412">
    <property type="term" value="P:translation"/>
    <property type="evidence" value="ECO:0007669"/>
    <property type="project" value="UniProtKB-UniRule"/>
</dbReference>
<dbReference type="FunFam" id="3.30.420.80:FF:000007">
    <property type="entry name" value="30S ribosomal protein S11"/>
    <property type="match status" value="1"/>
</dbReference>
<dbReference type="Gene3D" id="3.30.420.80">
    <property type="entry name" value="Ribosomal protein S11"/>
    <property type="match status" value="1"/>
</dbReference>
<dbReference type="HAMAP" id="MF_01310">
    <property type="entry name" value="Ribosomal_uS11"/>
    <property type="match status" value="1"/>
</dbReference>
<dbReference type="InterPro" id="IPR001971">
    <property type="entry name" value="Ribosomal_uS11"/>
</dbReference>
<dbReference type="InterPro" id="IPR019961">
    <property type="entry name" value="Ribosomal_uS11_archaeal"/>
</dbReference>
<dbReference type="InterPro" id="IPR018102">
    <property type="entry name" value="Ribosomal_uS11_CS"/>
</dbReference>
<dbReference type="InterPro" id="IPR036967">
    <property type="entry name" value="Ribosomal_uS11_sf"/>
</dbReference>
<dbReference type="NCBIfam" id="TIGR03628">
    <property type="entry name" value="arch_S11P"/>
    <property type="match status" value="1"/>
</dbReference>
<dbReference type="NCBIfam" id="NF007176">
    <property type="entry name" value="PRK09607.1"/>
    <property type="match status" value="1"/>
</dbReference>
<dbReference type="PANTHER" id="PTHR11759">
    <property type="entry name" value="40S RIBOSOMAL PROTEIN S14/30S RIBOSOMAL PROTEIN S11"/>
    <property type="match status" value="1"/>
</dbReference>
<dbReference type="Pfam" id="PF00411">
    <property type="entry name" value="Ribosomal_S11"/>
    <property type="match status" value="1"/>
</dbReference>
<dbReference type="PIRSF" id="PIRSF002131">
    <property type="entry name" value="Ribosomal_S11"/>
    <property type="match status" value="1"/>
</dbReference>
<dbReference type="SUPFAM" id="SSF53137">
    <property type="entry name" value="Translational machinery components"/>
    <property type="match status" value="1"/>
</dbReference>
<dbReference type="PROSITE" id="PS00054">
    <property type="entry name" value="RIBOSOMAL_S11"/>
    <property type="match status" value="1"/>
</dbReference>
<organism>
    <name type="scientific">Methanobrevibacter smithii (strain ATCC 35061 / DSM 861 / OCM 144 / PS)</name>
    <dbReference type="NCBI Taxonomy" id="420247"/>
    <lineage>
        <taxon>Archaea</taxon>
        <taxon>Methanobacteriati</taxon>
        <taxon>Methanobacteriota</taxon>
        <taxon>Methanomada group</taxon>
        <taxon>Methanobacteria</taxon>
        <taxon>Methanobacteriales</taxon>
        <taxon>Methanobacteriaceae</taxon>
        <taxon>Methanobrevibacter</taxon>
    </lineage>
</organism>
<keyword id="KW-0687">Ribonucleoprotein</keyword>
<keyword id="KW-0689">Ribosomal protein</keyword>
<keyword id="KW-0694">RNA-binding</keyword>
<keyword id="KW-0699">rRNA-binding</keyword>
<reference key="1">
    <citation type="journal article" date="2007" name="Proc. Natl. Acad. Sci. U.S.A.">
        <title>Genomic and metabolic adaptations of Methanobrevibacter smithii to the human gut.</title>
        <authorList>
            <person name="Samuel B.S."/>
            <person name="Hansen E.E."/>
            <person name="Manchester J.K."/>
            <person name="Coutinho P.M."/>
            <person name="Henrissat B."/>
            <person name="Fulton R."/>
            <person name="Latreille P."/>
            <person name="Kim K."/>
            <person name="Wilson R.K."/>
            <person name="Gordon J.I."/>
        </authorList>
    </citation>
    <scope>NUCLEOTIDE SEQUENCE [LARGE SCALE GENOMIC DNA]</scope>
    <source>
        <strain>ATCC 35061 / DSM 861 / OCM 144 / PS</strain>
    </source>
</reference>
<name>RS11_METS3</name>
<accession>A5UN54</accession>
<gene>
    <name evidence="1" type="primary">rps11</name>
    <name type="ordered locus">Msm_1427</name>
</gene>
<sequence length="130" mass="13700">MAKDEKWGIANIYSSYNNTIITVTDITGAETISQWSGGKVVRADRQQASPFAAMAAATRIADDAKEKGFVGLHIRVRAPGGNGHRSPGPGAQATIRALARAGIKIGKIEDITPIPHDGTGRPGGKRGRRV</sequence>
<feature type="chain" id="PRO_0000323350" description="Small ribosomal subunit protein uS11">
    <location>
        <begin position="1"/>
        <end position="130"/>
    </location>
</feature>
<feature type="region of interest" description="Disordered" evidence="2">
    <location>
        <begin position="109"/>
        <end position="130"/>
    </location>
</feature>
<evidence type="ECO:0000255" key="1">
    <source>
        <dbReference type="HAMAP-Rule" id="MF_01310"/>
    </source>
</evidence>
<evidence type="ECO:0000256" key="2">
    <source>
        <dbReference type="SAM" id="MobiDB-lite"/>
    </source>
</evidence>
<evidence type="ECO:0000305" key="3"/>
<comment type="function">
    <text evidence="1">Located on the platform of the 30S subunit.</text>
</comment>
<comment type="subunit">
    <text evidence="1">Part of the 30S ribosomal subunit.</text>
</comment>
<comment type="similarity">
    <text evidence="1">Belongs to the universal ribosomal protein uS11 family.</text>
</comment>
<protein>
    <recommendedName>
        <fullName evidence="1">Small ribosomal subunit protein uS11</fullName>
    </recommendedName>
    <alternativeName>
        <fullName evidence="3">30S ribosomal protein S11</fullName>
    </alternativeName>
</protein>
<proteinExistence type="inferred from homology"/>